<protein>
    <recommendedName>
        <fullName>Multidrug resistance protein MdtL</fullName>
    </recommendedName>
</protein>
<organism>
    <name type="scientific">Escherichia coli O157:H7</name>
    <dbReference type="NCBI Taxonomy" id="83334"/>
    <lineage>
        <taxon>Bacteria</taxon>
        <taxon>Pseudomonadati</taxon>
        <taxon>Pseudomonadota</taxon>
        <taxon>Gammaproteobacteria</taxon>
        <taxon>Enterobacterales</taxon>
        <taxon>Enterobacteriaceae</taxon>
        <taxon>Escherichia</taxon>
    </lineage>
</organism>
<feature type="chain" id="PRO_0000173356" description="Multidrug resistance protein MdtL">
    <location>
        <begin position="1"/>
        <end position="391"/>
    </location>
</feature>
<feature type="topological domain" description="Cytoplasmic" evidence="2">
    <location>
        <begin position="1"/>
        <end position="3"/>
    </location>
</feature>
<feature type="transmembrane region" description="Helical" evidence="2">
    <location>
        <begin position="4"/>
        <end position="24"/>
    </location>
</feature>
<feature type="topological domain" description="Periplasmic" evidence="2">
    <location>
        <begin position="25"/>
        <end position="41"/>
    </location>
</feature>
<feature type="transmembrane region" description="Helical" evidence="2">
    <location>
        <begin position="42"/>
        <end position="62"/>
    </location>
</feature>
<feature type="topological domain" description="Cytoplasmic" evidence="2">
    <location>
        <begin position="63"/>
        <end position="68"/>
    </location>
</feature>
<feature type="transmembrane region" description="Helical" evidence="2">
    <location>
        <begin position="69"/>
        <end position="89"/>
    </location>
</feature>
<feature type="topological domain" description="Periplasmic" evidence="2">
    <location>
        <begin position="90"/>
        <end position="92"/>
    </location>
</feature>
<feature type="transmembrane region" description="Helical" evidence="2">
    <location>
        <begin position="93"/>
        <end position="113"/>
    </location>
</feature>
<feature type="topological domain" description="Cytoplasmic" evidence="2">
    <location>
        <begin position="114"/>
        <end position="130"/>
    </location>
</feature>
<feature type="transmembrane region" description="Helical" evidence="2">
    <location>
        <begin position="131"/>
        <end position="151"/>
    </location>
</feature>
<feature type="topological domain" description="Periplasmic" evidence="2">
    <location>
        <begin position="152"/>
        <end position="157"/>
    </location>
</feature>
<feature type="transmembrane region" description="Helical" evidence="2">
    <location>
        <begin position="158"/>
        <end position="178"/>
    </location>
</feature>
<feature type="topological domain" description="Cytoplasmic" evidence="2">
    <location>
        <begin position="179"/>
        <end position="198"/>
    </location>
</feature>
<feature type="transmembrane region" description="Helical" evidence="2">
    <location>
        <begin position="199"/>
        <end position="221"/>
    </location>
</feature>
<feature type="topological domain" description="Periplasmic" evidence="2">
    <location>
        <begin position="222"/>
        <end position="244"/>
    </location>
</feature>
<feature type="transmembrane region" description="Helical" evidence="2">
    <location>
        <begin position="245"/>
        <end position="265"/>
    </location>
</feature>
<feature type="topological domain" description="Cytoplasmic" evidence="2">
    <location>
        <begin position="266"/>
        <end position="268"/>
    </location>
</feature>
<feature type="transmembrane region" description="Helical" evidence="2">
    <location>
        <begin position="269"/>
        <end position="289"/>
    </location>
</feature>
<feature type="topological domain" description="Periplasmic" evidence="2">
    <location>
        <begin position="290"/>
        <end position="292"/>
    </location>
</feature>
<feature type="transmembrane region" description="Helical" evidence="2">
    <location>
        <begin position="293"/>
        <end position="313"/>
    </location>
</feature>
<feature type="topological domain" description="Cytoplasmic" evidence="2">
    <location>
        <begin position="314"/>
        <end position="330"/>
    </location>
</feature>
<feature type="transmembrane region" description="Helical" evidence="2">
    <location>
        <begin position="331"/>
        <end position="351"/>
    </location>
</feature>
<feature type="topological domain" description="Periplasmic" evidence="2">
    <location>
        <begin position="352"/>
        <end position="355"/>
    </location>
</feature>
<feature type="transmembrane region" description="Helical" evidence="2">
    <location>
        <begin position="356"/>
        <end position="376"/>
    </location>
</feature>
<feature type="topological domain" description="Cytoplasmic" evidence="2">
    <location>
        <begin position="377"/>
        <end position="391"/>
    </location>
</feature>
<keyword id="KW-0046">Antibiotic resistance</keyword>
<keyword id="KW-0997">Cell inner membrane</keyword>
<keyword id="KW-1003">Cell membrane</keyword>
<keyword id="KW-0472">Membrane</keyword>
<keyword id="KW-1185">Reference proteome</keyword>
<keyword id="KW-0812">Transmembrane</keyword>
<keyword id="KW-1133">Transmembrane helix</keyword>
<keyword id="KW-0813">Transport</keyword>
<proteinExistence type="inferred from homology"/>
<reference key="1">
    <citation type="journal article" date="2001" name="Nature">
        <title>Genome sequence of enterohaemorrhagic Escherichia coli O157:H7.</title>
        <authorList>
            <person name="Perna N.T."/>
            <person name="Plunkett G. III"/>
            <person name="Burland V."/>
            <person name="Mau B."/>
            <person name="Glasner J.D."/>
            <person name="Rose D.J."/>
            <person name="Mayhew G.F."/>
            <person name="Evans P.S."/>
            <person name="Gregor J."/>
            <person name="Kirkpatrick H.A."/>
            <person name="Posfai G."/>
            <person name="Hackett J."/>
            <person name="Klink S."/>
            <person name="Boutin A."/>
            <person name="Shao Y."/>
            <person name="Miller L."/>
            <person name="Grotbeck E.J."/>
            <person name="Davis N.W."/>
            <person name="Lim A."/>
            <person name="Dimalanta E.T."/>
            <person name="Potamousis K."/>
            <person name="Apodaca J."/>
            <person name="Anantharaman T.S."/>
            <person name="Lin J."/>
            <person name="Yen G."/>
            <person name="Schwartz D.C."/>
            <person name="Welch R.A."/>
            <person name="Blattner F.R."/>
        </authorList>
    </citation>
    <scope>NUCLEOTIDE SEQUENCE [LARGE SCALE GENOMIC DNA]</scope>
    <source>
        <strain>O157:H7 / EDL933 / ATCC 700927 / EHEC</strain>
    </source>
</reference>
<reference key="2">
    <citation type="journal article" date="2001" name="DNA Res.">
        <title>Complete genome sequence of enterohemorrhagic Escherichia coli O157:H7 and genomic comparison with a laboratory strain K-12.</title>
        <authorList>
            <person name="Hayashi T."/>
            <person name="Makino K."/>
            <person name="Ohnishi M."/>
            <person name="Kurokawa K."/>
            <person name="Ishii K."/>
            <person name="Yokoyama K."/>
            <person name="Han C.-G."/>
            <person name="Ohtsubo E."/>
            <person name="Nakayama K."/>
            <person name="Murata T."/>
            <person name="Tanaka M."/>
            <person name="Tobe T."/>
            <person name="Iida T."/>
            <person name="Takami H."/>
            <person name="Honda T."/>
            <person name="Sasakawa C."/>
            <person name="Ogasawara N."/>
            <person name="Yasunaga T."/>
            <person name="Kuhara S."/>
            <person name="Shiba T."/>
            <person name="Hattori M."/>
            <person name="Shinagawa H."/>
        </authorList>
    </citation>
    <scope>NUCLEOTIDE SEQUENCE [LARGE SCALE GENOMIC DNA]</scope>
    <source>
        <strain>O157:H7 / Sakai / RIMD 0509952 / EHEC</strain>
    </source>
</reference>
<sequence length="391" mass="41612">MSRFLICSFALVLLYPAGIDMYLVGLPRIAADLNASEAQLHIAFSVYLAGMAAAMLFAGKVADRSGRKPVAIPGAALFIITSVFCSLAETSTLFLAGRFLQGLGAGCCYVVAFAILRDTLDDRRRAKVLSLLNGITCIIPVLAPVLGHLIMLKFPWQSLFWTMAIMGIAVLMLSLFILKETRPAAPAASDKSRENSESLLNRFFLSRVVITTLSVSVILTFVNTSPVLLMEIMGFERGEYATIMALTAGVSMTVSFSTPFALGIFKPRTLMITSQVLFLAAGITLTVSPSHAVSLFGITLICAGFSVGFGVAMSQALGPFSLRAGVASSTLGIAQVCGSSLWIWLAAVVGISAWNMLIGILIACSIVSLLLIMFVAPGRPVTAHEEIHHHA</sequence>
<comment type="function">
    <text evidence="1">Confers resistance to chloramphenicol.</text>
</comment>
<comment type="subcellular location">
    <subcellularLocation>
        <location evidence="1">Cell inner membrane</location>
        <topology evidence="1">Multi-pass membrane protein</topology>
    </subcellularLocation>
</comment>
<comment type="similarity">
    <text evidence="3">Belongs to the major facilitator superfamily. DHA1 family. MdtL (TC 2.A.1.2.22) subfamily.</text>
</comment>
<name>MDTL_ECO57</name>
<gene>
    <name type="primary">mdtL</name>
    <name type="ordered locus">Z5205</name>
    <name type="ordered locus">ECs4647</name>
</gene>
<evidence type="ECO:0000250" key="1"/>
<evidence type="ECO:0000255" key="2"/>
<evidence type="ECO:0000305" key="3"/>
<dbReference type="EMBL" id="AE005174">
    <property type="protein sequence ID" value="AAG58910.1"/>
    <property type="molecule type" value="Genomic_DNA"/>
</dbReference>
<dbReference type="EMBL" id="BA000007">
    <property type="protein sequence ID" value="BAB38070.1"/>
    <property type="molecule type" value="Genomic_DNA"/>
</dbReference>
<dbReference type="PIR" id="B86056">
    <property type="entry name" value="B86056"/>
</dbReference>
<dbReference type="PIR" id="G91209">
    <property type="entry name" value="G91209"/>
</dbReference>
<dbReference type="RefSeq" id="NP_312674.1">
    <property type="nucleotide sequence ID" value="NC_002695.1"/>
</dbReference>
<dbReference type="RefSeq" id="WP_000086017.1">
    <property type="nucleotide sequence ID" value="NZ_VOAI01000011.1"/>
</dbReference>
<dbReference type="SMR" id="Q8XB24"/>
<dbReference type="STRING" id="155864.Z5205"/>
<dbReference type="GeneID" id="915390"/>
<dbReference type="KEGG" id="ece:Z5205"/>
<dbReference type="KEGG" id="ecs:ECs_4647"/>
<dbReference type="PATRIC" id="fig|386585.9.peg.4856"/>
<dbReference type="eggNOG" id="COG2814">
    <property type="taxonomic scope" value="Bacteria"/>
</dbReference>
<dbReference type="HOGENOM" id="CLU_001265_47_1_6"/>
<dbReference type="OMA" id="SGIDMYL"/>
<dbReference type="Proteomes" id="UP000000558">
    <property type="component" value="Chromosome"/>
</dbReference>
<dbReference type="Proteomes" id="UP000002519">
    <property type="component" value="Chromosome"/>
</dbReference>
<dbReference type="GO" id="GO:0005886">
    <property type="term" value="C:plasma membrane"/>
    <property type="evidence" value="ECO:0007669"/>
    <property type="project" value="UniProtKB-SubCell"/>
</dbReference>
<dbReference type="GO" id="GO:0022857">
    <property type="term" value="F:transmembrane transporter activity"/>
    <property type="evidence" value="ECO:0007669"/>
    <property type="project" value="UniProtKB-UniRule"/>
</dbReference>
<dbReference type="GO" id="GO:0046677">
    <property type="term" value="P:response to antibiotic"/>
    <property type="evidence" value="ECO:0007669"/>
    <property type="project" value="UniProtKB-KW"/>
</dbReference>
<dbReference type="CDD" id="cd17320">
    <property type="entry name" value="MFS_MdfA_MDR_like"/>
    <property type="match status" value="1"/>
</dbReference>
<dbReference type="FunFam" id="1.20.1720.10:FF:000003">
    <property type="entry name" value="Multidrug resistance protein MdtL"/>
    <property type="match status" value="1"/>
</dbReference>
<dbReference type="Gene3D" id="1.20.1720.10">
    <property type="entry name" value="Multidrug resistance protein D"/>
    <property type="match status" value="1"/>
</dbReference>
<dbReference type="HAMAP" id="MF_01530">
    <property type="entry name" value="MFS_MdtL"/>
    <property type="match status" value="1"/>
</dbReference>
<dbReference type="InterPro" id="IPR011701">
    <property type="entry name" value="MFS"/>
</dbReference>
<dbReference type="InterPro" id="IPR020846">
    <property type="entry name" value="MFS_dom"/>
</dbReference>
<dbReference type="InterPro" id="IPR050189">
    <property type="entry name" value="MFS_Efflux_Transporters"/>
</dbReference>
<dbReference type="InterPro" id="IPR036259">
    <property type="entry name" value="MFS_trans_sf"/>
</dbReference>
<dbReference type="InterPro" id="IPR023697">
    <property type="entry name" value="Multidrug-R_MdtL"/>
</dbReference>
<dbReference type="NCBIfam" id="NF007782">
    <property type="entry name" value="PRK10473.1"/>
    <property type="match status" value="1"/>
</dbReference>
<dbReference type="PANTHER" id="PTHR43124:SF3">
    <property type="entry name" value="CHLORAMPHENICOL EFFLUX PUMP RV0191"/>
    <property type="match status" value="1"/>
</dbReference>
<dbReference type="PANTHER" id="PTHR43124">
    <property type="entry name" value="PURINE EFFLUX PUMP PBUE"/>
    <property type="match status" value="1"/>
</dbReference>
<dbReference type="Pfam" id="PF07690">
    <property type="entry name" value="MFS_1"/>
    <property type="match status" value="1"/>
</dbReference>
<dbReference type="SUPFAM" id="SSF103473">
    <property type="entry name" value="MFS general substrate transporter"/>
    <property type="match status" value="1"/>
</dbReference>
<dbReference type="PROSITE" id="PS50850">
    <property type="entry name" value="MFS"/>
    <property type="match status" value="1"/>
</dbReference>
<accession>Q8XB24</accession>
<accession>Q7A9I9</accession>